<organism>
    <name type="scientific">Bothrops cotiara</name>
    <name type="common">Cotiara</name>
    <name type="synonym">Rhinocerophis cotiara</name>
    <dbReference type="NCBI Taxonomy" id="8727"/>
    <lineage>
        <taxon>Eukaryota</taxon>
        <taxon>Metazoa</taxon>
        <taxon>Chordata</taxon>
        <taxon>Craniata</taxon>
        <taxon>Vertebrata</taxon>
        <taxon>Euteleostomi</taxon>
        <taxon>Lepidosauria</taxon>
        <taxon>Squamata</taxon>
        <taxon>Bifurcata</taxon>
        <taxon>Unidentata</taxon>
        <taxon>Episquamata</taxon>
        <taxon>Toxicofera</taxon>
        <taxon>Serpentes</taxon>
        <taxon>Colubroidea</taxon>
        <taxon>Viperidae</taxon>
        <taxon>Crotalinae</taxon>
        <taxon>Bothrops</taxon>
    </lineage>
</organism>
<sequence length="10" mass="1149">QNWPSPKVPP</sequence>
<proteinExistence type="evidence at protein level"/>
<accession>P0DJK3</accession>
<feature type="peptide" id="PRO_0000421904" description="Bradykinin-potentiating peptide 10e">
    <location>
        <begin position="1"/>
        <end position="10"/>
    </location>
</feature>
<feature type="modified residue" description="Pyrrolidone carboxylic acid" evidence="1">
    <location>
        <position position="1"/>
    </location>
</feature>
<feature type="unsure residue" description="K or Q">
    <location>
        <position position="7"/>
    </location>
</feature>
<comment type="function">
    <text evidence="1">This peptide evokes transient hypotension (-11 mmHg) similar to that evoked by 0.5 ug of bradykinin, when injected alone into rats. It has a high bradykinin-potentiating effect (113%), when 60 nmol of BPP-10e are coinjected with 0.5 ug of bradykinin into rats. It inhibits angiotensin converting enzyme (ACE) activity with a K(i)app of 16.21 uM.</text>
</comment>
<comment type="subcellular location">
    <subcellularLocation>
        <location>Secreted</location>
    </subcellularLocation>
</comment>
<comment type="tissue specificity">
    <text>Expressed by the venom gland.</text>
</comment>
<comment type="mass spectrometry" mass="1131.5" method="Electrospray" evidence="1"/>
<comment type="similarity">
    <text evidence="2">Belongs to the bradykinin-potentiating peptide family.</text>
</comment>
<reference key="1">
    <citation type="journal article" date="2012" name="Mol. Cell. Proteomics">
        <title>Peptidomics of three Bothrops snake venoms: insights into the molecular diversification of proteomes and peptidomes.</title>
        <authorList>
            <person name="Tashima A.K."/>
            <person name="Zelanis A."/>
            <person name="Kitano E.S."/>
            <person name="Ianzer D."/>
            <person name="Melo R.L."/>
            <person name="Rioli V."/>
            <person name="Sant'anna S.S."/>
            <person name="Schenberg A.C."/>
            <person name="Camargo A.C."/>
            <person name="Serrano S.M.T."/>
        </authorList>
    </citation>
    <scope>PROTEIN SEQUENCE</scope>
    <scope>SYNTHESIS</scope>
    <scope>FUNCTION</scope>
    <scope>PYROGLUTAMATE FORMATION AT GLN-1</scope>
    <scope>MASS SPECTROMETRY</scope>
    <source>
        <tissue>Venom</tissue>
    </source>
</reference>
<evidence type="ECO:0000269" key="1">
    <source>
    </source>
</evidence>
<evidence type="ECO:0000305" key="2"/>
<dbReference type="GO" id="GO:0005576">
    <property type="term" value="C:extracellular region"/>
    <property type="evidence" value="ECO:0007669"/>
    <property type="project" value="UniProtKB-SubCell"/>
</dbReference>
<dbReference type="GO" id="GO:0030414">
    <property type="term" value="F:peptidase inhibitor activity"/>
    <property type="evidence" value="ECO:0007669"/>
    <property type="project" value="UniProtKB-KW"/>
</dbReference>
<dbReference type="GO" id="GO:0090729">
    <property type="term" value="F:toxin activity"/>
    <property type="evidence" value="ECO:0007669"/>
    <property type="project" value="UniProtKB-KW"/>
</dbReference>
<dbReference type="GO" id="GO:0008217">
    <property type="term" value="P:regulation of blood pressure"/>
    <property type="evidence" value="ECO:0007669"/>
    <property type="project" value="UniProtKB-KW"/>
</dbReference>
<protein>
    <recommendedName>
        <fullName>Bradykinin-potentiating peptide 10e</fullName>
        <shortName>BPP-10e</shortName>
    </recommendedName>
</protein>
<keyword id="KW-0903">Direct protein sequencing</keyword>
<keyword id="KW-0382">Hypotensive agent</keyword>
<keyword id="KW-0481">Metalloenzyme inhibitor</keyword>
<keyword id="KW-0483">Metalloprotease inhibitor</keyword>
<keyword id="KW-0646">Protease inhibitor</keyword>
<keyword id="KW-0873">Pyrrolidone carboxylic acid</keyword>
<keyword id="KW-0964">Secreted</keyword>
<keyword id="KW-0800">Toxin</keyword>
<name>BPPAE_BOTCO</name>